<name>MSRB_PSEPW</name>
<feature type="chain" id="PRO_1000145378" description="Peptide methionine sulfoxide reductase MsrB">
    <location>
        <begin position="1"/>
        <end position="133"/>
    </location>
</feature>
<feature type="domain" description="MsrB" evidence="2">
    <location>
        <begin position="8"/>
        <end position="130"/>
    </location>
</feature>
<feature type="active site" description="Nucleophile" evidence="2">
    <location>
        <position position="119"/>
    </location>
</feature>
<feature type="binding site" evidence="2">
    <location>
        <position position="47"/>
    </location>
    <ligand>
        <name>Zn(2+)</name>
        <dbReference type="ChEBI" id="CHEBI:29105"/>
    </ligand>
</feature>
<feature type="binding site" evidence="2">
    <location>
        <position position="50"/>
    </location>
    <ligand>
        <name>Zn(2+)</name>
        <dbReference type="ChEBI" id="CHEBI:29105"/>
    </ligand>
</feature>
<feature type="binding site" evidence="2">
    <location>
        <position position="96"/>
    </location>
    <ligand>
        <name>Zn(2+)</name>
        <dbReference type="ChEBI" id="CHEBI:29105"/>
    </ligand>
</feature>
<feature type="binding site" evidence="2">
    <location>
        <position position="99"/>
    </location>
    <ligand>
        <name>Zn(2+)</name>
        <dbReference type="ChEBI" id="CHEBI:29105"/>
    </ligand>
</feature>
<sequence>MQKIDKTLEEWRAMLDPEQYQVCRLKGTERPFTGKYNSEKRAGTYHCICCDLPLFDSNTKFDSGCGWPSFYAPIEDSAMIETRDTSHGMIRTEVTCAQCDAHLGHVFPDGPPPTGLRYCINSVCLDFKPRDGA</sequence>
<dbReference type="EC" id="1.8.4.12" evidence="1"/>
<dbReference type="EMBL" id="CP000949">
    <property type="protein sequence ID" value="ACA71987.1"/>
    <property type="molecule type" value="Genomic_DNA"/>
</dbReference>
<dbReference type="SMR" id="B1J4W5"/>
<dbReference type="STRING" id="390235.PputW619_1482"/>
<dbReference type="KEGG" id="ppw:PputW619_1482"/>
<dbReference type="eggNOG" id="COG0229">
    <property type="taxonomic scope" value="Bacteria"/>
</dbReference>
<dbReference type="HOGENOM" id="CLU_031040_8_5_6"/>
<dbReference type="OrthoDB" id="9785497at2"/>
<dbReference type="GO" id="GO:0005737">
    <property type="term" value="C:cytoplasm"/>
    <property type="evidence" value="ECO:0007669"/>
    <property type="project" value="TreeGrafter"/>
</dbReference>
<dbReference type="GO" id="GO:0033743">
    <property type="term" value="F:peptide-methionine (R)-S-oxide reductase activity"/>
    <property type="evidence" value="ECO:0007669"/>
    <property type="project" value="UniProtKB-UniRule"/>
</dbReference>
<dbReference type="GO" id="GO:0008270">
    <property type="term" value="F:zinc ion binding"/>
    <property type="evidence" value="ECO:0007669"/>
    <property type="project" value="UniProtKB-UniRule"/>
</dbReference>
<dbReference type="GO" id="GO:0030091">
    <property type="term" value="P:protein repair"/>
    <property type="evidence" value="ECO:0007669"/>
    <property type="project" value="InterPro"/>
</dbReference>
<dbReference type="GO" id="GO:0006979">
    <property type="term" value="P:response to oxidative stress"/>
    <property type="evidence" value="ECO:0007669"/>
    <property type="project" value="InterPro"/>
</dbReference>
<dbReference type="FunFam" id="2.170.150.20:FF:000001">
    <property type="entry name" value="Peptide methionine sulfoxide reductase MsrB"/>
    <property type="match status" value="1"/>
</dbReference>
<dbReference type="Gene3D" id="2.170.150.20">
    <property type="entry name" value="Peptide methionine sulfoxide reductase"/>
    <property type="match status" value="1"/>
</dbReference>
<dbReference type="HAMAP" id="MF_01400">
    <property type="entry name" value="MsrB"/>
    <property type="match status" value="1"/>
</dbReference>
<dbReference type="InterPro" id="IPR028427">
    <property type="entry name" value="Met_Sox_Rdtase_MsrB"/>
</dbReference>
<dbReference type="InterPro" id="IPR002579">
    <property type="entry name" value="Met_Sox_Rdtase_MsrB_dom"/>
</dbReference>
<dbReference type="InterPro" id="IPR011057">
    <property type="entry name" value="Mss4-like_sf"/>
</dbReference>
<dbReference type="NCBIfam" id="TIGR00357">
    <property type="entry name" value="peptide-methionine (R)-S-oxide reductase MsrB"/>
    <property type="match status" value="1"/>
</dbReference>
<dbReference type="PANTHER" id="PTHR10173">
    <property type="entry name" value="METHIONINE SULFOXIDE REDUCTASE"/>
    <property type="match status" value="1"/>
</dbReference>
<dbReference type="PANTHER" id="PTHR10173:SF52">
    <property type="entry name" value="METHIONINE-R-SULFOXIDE REDUCTASE B1"/>
    <property type="match status" value="1"/>
</dbReference>
<dbReference type="Pfam" id="PF01641">
    <property type="entry name" value="SelR"/>
    <property type="match status" value="1"/>
</dbReference>
<dbReference type="SUPFAM" id="SSF51316">
    <property type="entry name" value="Mss4-like"/>
    <property type="match status" value="1"/>
</dbReference>
<dbReference type="PROSITE" id="PS51790">
    <property type="entry name" value="MSRB"/>
    <property type="match status" value="1"/>
</dbReference>
<keyword id="KW-0479">Metal-binding</keyword>
<keyword id="KW-0560">Oxidoreductase</keyword>
<keyword id="KW-0862">Zinc</keyword>
<reference key="1">
    <citation type="submission" date="2008-02" db="EMBL/GenBank/DDBJ databases">
        <title>Complete sequence of Pseudomonas putida W619.</title>
        <authorList>
            <person name="Copeland A."/>
            <person name="Lucas S."/>
            <person name="Lapidus A."/>
            <person name="Barry K."/>
            <person name="Detter J.C."/>
            <person name="Glavina del Rio T."/>
            <person name="Dalin E."/>
            <person name="Tice H."/>
            <person name="Pitluck S."/>
            <person name="Chain P."/>
            <person name="Malfatti S."/>
            <person name="Shin M."/>
            <person name="Vergez L."/>
            <person name="Schmutz J."/>
            <person name="Larimer F."/>
            <person name="Land M."/>
            <person name="Hauser L."/>
            <person name="Kyrpides N."/>
            <person name="Kim E."/>
            <person name="Taghavi S."/>
            <person name="Vangronsveld D."/>
            <person name="van der Lelie D."/>
            <person name="Richardson P."/>
        </authorList>
    </citation>
    <scope>NUCLEOTIDE SEQUENCE [LARGE SCALE GENOMIC DNA]</scope>
    <source>
        <strain>W619</strain>
    </source>
</reference>
<organism>
    <name type="scientific">Pseudomonas putida (strain W619)</name>
    <dbReference type="NCBI Taxonomy" id="390235"/>
    <lineage>
        <taxon>Bacteria</taxon>
        <taxon>Pseudomonadati</taxon>
        <taxon>Pseudomonadota</taxon>
        <taxon>Gammaproteobacteria</taxon>
        <taxon>Pseudomonadales</taxon>
        <taxon>Pseudomonadaceae</taxon>
        <taxon>Pseudomonas</taxon>
    </lineage>
</organism>
<evidence type="ECO:0000255" key="1">
    <source>
        <dbReference type="HAMAP-Rule" id="MF_01400"/>
    </source>
</evidence>
<evidence type="ECO:0000255" key="2">
    <source>
        <dbReference type="PROSITE-ProRule" id="PRU01126"/>
    </source>
</evidence>
<accession>B1J4W5</accession>
<gene>
    <name evidence="1" type="primary">msrB</name>
    <name type="ordered locus">PputW619_1482</name>
</gene>
<proteinExistence type="inferred from homology"/>
<comment type="catalytic activity">
    <reaction evidence="1">
        <text>L-methionyl-[protein] + [thioredoxin]-disulfide + H2O = L-methionyl-(R)-S-oxide-[protein] + [thioredoxin]-dithiol</text>
        <dbReference type="Rhea" id="RHEA:24164"/>
        <dbReference type="Rhea" id="RHEA-COMP:10698"/>
        <dbReference type="Rhea" id="RHEA-COMP:10700"/>
        <dbReference type="Rhea" id="RHEA-COMP:12313"/>
        <dbReference type="Rhea" id="RHEA-COMP:12314"/>
        <dbReference type="ChEBI" id="CHEBI:15377"/>
        <dbReference type="ChEBI" id="CHEBI:16044"/>
        <dbReference type="ChEBI" id="CHEBI:29950"/>
        <dbReference type="ChEBI" id="CHEBI:45764"/>
        <dbReference type="ChEBI" id="CHEBI:50058"/>
        <dbReference type="EC" id="1.8.4.12"/>
    </reaction>
</comment>
<comment type="cofactor">
    <cofactor evidence="1">
        <name>Zn(2+)</name>
        <dbReference type="ChEBI" id="CHEBI:29105"/>
    </cofactor>
    <text evidence="1">Binds 1 zinc ion per subunit. The zinc ion is important for the structural integrity of the protein.</text>
</comment>
<comment type="similarity">
    <text evidence="1">Belongs to the MsrB Met sulfoxide reductase family.</text>
</comment>
<protein>
    <recommendedName>
        <fullName evidence="1">Peptide methionine sulfoxide reductase MsrB</fullName>
        <ecNumber evidence="1">1.8.4.12</ecNumber>
    </recommendedName>
    <alternativeName>
        <fullName evidence="1">Peptide-methionine (R)-S-oxide reductase</fullName>
    </alternativeName>
</protein>